<feature type="chain" id="PRO_0000250580" description="AP2-associated protein kinase 1">
    <location>
        <begin position="1"/>
        <end position="962"/>
    </location>
</feature>
<feature type="domain" description="Protein kinase" evidence="4">
    <location>
        <begin position="46"/>
        <end position="314"/>
    </location>
</feature>
<feature type="region of interest" description="Disordered" evidence="6">
    <location>
        <begin position="1"/>
        <end position="27"/>
    </location>
</feature>
<feature type="region of interest" description="Disordered" evidence="6">
    <location>
        <begin position="325"/>
        <end position="515"/>
    </location>
</feature>
<feature type="region of interest" description="Disordered" evidence="6">
    <location>
        <begin position="576"/>
        <end position="633"/>
    </location>
</feature>
<feature type="region of interest" description="Disordered" evidence="6">
    <location>
        <begin position="664"/>
        <end position="702"/>
    </location>
</feature>
<feature type="region of interest" description="Clathrin-binding domain (CBD)" evidence="2">
    <location>
        <begin position="824"/>
        <end position="961"/>
    </location>
</feature>
<feature type="region of interest" description="Disordered" evidence="6">
    <location>
        <begin position="839"/>
        <end position="860"/>
    </location>
</feature>
<feature type="region of interest" description="Disordered" evidence="6">
    <location>
        <begin position="925"/>
        <end position="946"/>
    </location>
</feature>
<feature type="compositionally biased region" description="Basic and acidic residues" evidence="6">
    <location>
        <begin position="1"/>
        <end position="11"/>
    </location>
</feature>
<feature type="compositionally biased region" description="Gly residues" evidence="6">
    <location>
        <begin position="14"/>
        <end position="27"/>
    </location>
</feature>
<feature type="compositionally biased region" description="Polar residues" evidence="6">
    <location>
        <begin position="397"/>
        <end position="418"/>
    </location>
</feature>
<feature type="compositionally biased region" description="Low complexity" evidence="6">
    <location>
        <begin position="419"/>
        <end position="434"/>
    </location>
</feature>
<feature type="compositionally biased region" description="Pro residues" evidence="6">
    <location>
        <begin position="435"/>
        <end position="444"/>
    </location>
</feature>
<feature type="compositionally biased region" description="Low complexity" evidence="6">
    <location>
        <begin position="445"/>
        <end position="485"/>
    </location>
</feature>
<feature type="compositionally biased region" description="Low complexity" evidence="6">
    <location>
        <begin position="498"/>
        <end position="514"/>
    </location>
</feature>
<feature type="compositionally biased region" description="Low complexity" evidence="6">
    <location>
        <begin position="576"/>
        <end position="606"/>
    </location>
</feature>
<feature type="compositionally biased region" description="Polar residues" evidence="6">
    <location>
        <begin position="614"/>
        <end position="628"/>
    </location>
</feature>
<feature type="compositionally biased region" description="Low complexity" evidence="6">
    <location>
        <begin position="664"/>
        <end position="677"/>
    </location>
</feature>
<feature type="compositionally biased region" description="Polar residues" evidence="6">
    <location>
        <begin position="678"/>
        <end position="697"/>
    </location>
</feature>
<feature type="compositionally biased region" description="Polar residues" evidence="6">
    <location>
        <begin position="846"/>
        <end position="860"/>
    </location>
</feature>
<feature type="compositionally biased region" description="Low complexity" evidence="6">
    <location>
        <begin position="932"/>
        <end position="945"/>
    </location>
</feature>
<feature type="active site" description="Proton acceptor" evidence="4 5">
    <location>
        <position position="176"/>
    </location>
</feature>
<feature type="binding site" evidence="4">
    <location>
        <begin position="52"/>
        <end position="60"/>
    </location>
    <ligand>
        <name>ATP</name>
        <dbReference type="ChEBI" id="CHEBI:30616"/>
    </ligand>
</feature>
<feature type="binding site" evidence="4">
    <location>
        <position position="74"/>
    </location>
    <ligand>
        <name>ATP</name>
        <dbReference type="ChEBI" id="CHEBI:30616"/>
    </ligand>
</feature>
<feature type="modified residue" description="N-acetylmethionine" evidence="2">
    <location>
        <position position="1"/>
    </location>
</feature>
<feature type="modified residue" description="Phosphoserine" evidence="2">
    <location>
        <position position="14"/>
    </location>
</feature>
<feature type="modified residue" description="Phosphotyrosine" evidence="2">
    <location>
        <position position="234"/>
    </location>
</feature>
<feature type="modified residue" description="Phosphoserine" evidence="2">
    <location>
        <position position="235"/>
    </location>
</feature>
<feature type="modified residue" description="Phosphothreonine" evidence="2">
    <location>
        <position position="353"/>
    </location>
</feature>
<feature type="modified residue" description="Phosphothreonine" evidence="2">
    <location>
        <position position="388"/>
    </location>
</feature>
<feature type="modified residue" description="Omega-N-methylarginine" evidence="3">
    <location>
        <position position="390"/>
    </location>
</feature>
<feature type="modified residue" description="Phosphothreonine" evidence="2">
    <location>
        <position position="440"/>
    </location>
</feature>
<feature type="modified residue" description="Phosphothreonine" evidence="2">
    <location>
        <position position="607"/>
    </location>
</feature>
<feature type="modified residue" description="Phosphoserine" evidence="9">
    <location>
        <position position="619"/>
    </location>
</feature>
<feature type="modified residue" description="Phosphothreonine" evidence="9">
    <location>
        <position position="621"/>
    </location>
</feature>
<feature type="modified residue" description="Phosphoserine" evidence="2">
    <location>
        <position position="624"/>
    </location>
</feature>
<feature type="modified residue" description="Phosphoserine" evidence="9">
    <location>
        <position position="625"/>
    </location>
</feature>
<feature type="modified residue" description="Phosphoserine" evidence="9">
    <location>
        <position position="638"/>
    </location>
</feature>
<feature type="modified residue" description="Phosphoserine" evidence="2">
    <location>
        <position position="651"/>
    </location>
</feature>
<feature type="modified residue" description="Phosphothreonine" evidence="2">
    <location>
        <position position="654"/>
    </location>
</feature>
<feature type="modified residue" description="Phosphoserine" evidence="2">
    <location>
        <position position="732"/>
    </location>
</feature>
<feature type="modified residue" description="Phosphoserine" evidence="3">
    <location>
        <position position="847"/>
    </location>
</feature>
<feature type="modified residue" description="Phosphoserine" evidence="3">
    <location>
        <position position="938"/>
    </location>
</feature>
<feature type="modified residue" description="Phosphoserine" evidence="9">
    <location>
        <position position="939"/>
    </location>
</feature>
<proteinExistence type="evidence at protein level"/>
<comment type="function">
    <text evidence="2 7">Regulates clathrin-mediated endocytosis by phosphorylating the AP2M1/mu2 subunit of the adaptor protein complex 2 (AP-2) which ensures high affinity binding of AP-2 to cargo membrane proteins during the initial stages of endocytosis (PubMed:11877461). Preferentially, may phosphorylate substrates on threonine residues (By similarity). Regulates phosphorylation of other AP-2 subunits as well as AP-2 localization and AP-2-mediated internalization of ligand complexes (By similarity). Phosphorylates NUMB and regulates its cellular localization, promoting NUMB localization to endosomes (By similarity). Binds to and stabilizes the activated form of NOTCH1, increases its localization in endosomes and regulates its transcriptional activity (By similarity).</text>
</comment>
<comment type="catalytic activity">
    <reaction evidence="8">
        <text>L-seryl-[protein] + ATP = O-phospho-L-seryl-[protein] + ADP + H(+)</text>
        <dbReference type="Rhea" id="RHEA:17989"/>
        <dbReference type="Rhea" id="RHEA-COMP:9863"/>
        <dbReference type="Rhea" id="RHEA-COMP:11604"/>
        <dbReference type="ChEBI" id="CHEBI:15378"/>
        <dbReference type="ChEBI" id="CHEBI:29999"/>
        <dbReference type="ChEBI" id="CHEBI:30616"/>
        <dbReference type="ChEBI" id="CHEBI:83421"/>
        <dbReference type="ChEBI" id="CHEBI:456216"/>
        <dbReference type="EC" id="2.7.11.1"/>
    </reaction>
</comment>
<comment type="catalytic activity">
    <reaction evidence="2">
        <text>L-threonyl-[protein] + ATP = O-phospho-L-threonyl-[protein] + ADP + H(+)</text>
        <dbReference type="Rhea" id="RHEA:46608"/>
        <dbReference type="Rhea" id="RHEA-COMP:11060"/>
        <dbReference type="Rhea" id="RHEA-COMP:11605"/>
        <dbReference type="ChEBI" id="CHEBI:15378"/>
        <dbReference type="ChEBI" id="CHEBI:30013"/>
        <dbReference type="ChEBI" id="CHEBI:30616"/>
        <dbReference type="ChEBI" id="CHEBI:61977"/>
        <dbReference type="ChEBI" id="CHEBI:456216"/>
        <dbReference type="EC" id="2.7.11.1"/>
    </reaction>
</comment>
<comment type="activity regulation">
    <text evidence="2">Stimulated by clathrin.</text>
</comment>
<comment type="subunit">
    <text evidence="2 7">Interacts (via CBD domain) with clathrin (By similarity). Interacts with AP-2 complex (By similarity). Interacts with NUMB (By similarity). Interacts with alpha-adaptin (PubMed:11877461). Interacts with EPS15 (By similarity). Interacts with membrane-bound activated NOTCH1 but not with the inactive full-length form of NOTCH1 (By similarity). Preferentially interacts with monoubiquitinated activated NOTCH1 compared to the non-ubiquitinated form (By similarity).</text>
</comment>
<comment type="subcellular location">
    <subcellularLocation>
        <location evidence="1">Cell membrane</location>
        <topology evidence="1">Peripheral membrane protein</topology>
    </subcellularLocation>
    <subcellularLocation>
        <location evidence="7">Membrane</location>
        <location evidence="7">Clathrin-coated pit</location>
    </subcellularLocation>
    <subcellularLocation>
        <location evidence="7">Presynapse</location>
    </subcellularLocation>
    <text evidence="7">Active when found in clathrin-coated pits at the plasma membrane. In neuronal cells, enriched at presynaptic terminals. In non-neuronal cells, enriched at leading edge of migrating cells.</text>
</comment>
<comment type="PTM">
    <text evidence="2">Autophosphorylated.</text>
</comment>
<comment type="similarity">
    <text evidence="4">Belongs to the protein kinase superfamily. Ser/Thr protein kinase family.</text>
</comment>
<dbReference type="EC" id="2.7.11.1" evidence="2"/>
<dbReference type="EMBL" id="AABR03032075">
    <property type="status" value="NOT_ANNOTATED_CDS"/>
    <property type="molecule type" value="Genomic_DNA"/>
</dbReference>
<dbReference type="EMBL" id="AABR03032129">
    <property type="status" value="NOT_ANNOTATED_CDS"/>
    <property type="molecule type" value="Genomic_DNA"/>
</dbReference>
<dbReference type="SMR" id="P0C1X8"/>
<dbReference type="FunCoup" id="P0C1X8">
    <property type="interactions" value="1821"/>
</dbReference>
<dbReference type="IntAct" id="P0C1X8">
    <property type="interactions" value="1"/>
</dbReference>
<dbReference type="MINT" id="P0C1X8"/>
<dbReference type="STRING" id="10116.ENSRNOP00000044665"/>
<dbReference type="GlyGen" id="P0C1X8">
    <property type="glycosylation" value="2 sites"/>
</dbReference>
<dbReference type="iPTMnet" id="P0C1X8"/>
<dbReference type="PhosphoSitePlus" id="P0C1X8"/>
<dbReference type="jPOST" id="P0C1X8"/>
<dbReference type="PaxDb" id="10116-ENSRNOP00000044665"/>
<dbReference type="UCSC" id="RGD:1305520">
    <property type="organism name" value="rat"/>
</dbReference>
<dbReference type="AGR" id="RGD:1305520"/>
<dbReference type="RGD" id="1305520">
    <property type="gene designation" value="Aak1"/>
</dbReference>
<dbReference type="eggNOG" id="KOG1989">
    <property type="taxonomic scope" value="Eukaryota"/>
</dbReference>
<dbReference type="InParanoid" id="P0C1X8"/>
<dbReference type="PhylomeDB" id="P0C1X8"/>
<dbReference type="Reactome" id="R-RNO-8856825">
    <property type="pathway name" value="Cargo recognition for clathrin-mediated endocytosis"/>
</dbReference>
<dbReference type="Reactome" id="R-RNO-8856828">
    <property type="pathway name" value="Clathrin-mediated endocytosis"/>
</dbReference>
<dbReference type="PRO" id="PR:P0C1X8"/>
<dbReference type="Proteomes" id="UP000002494">
    <property type="component" value="Unplaced"/>
</dbReference>
<dbReference type="GO" id="GO:0044305">
    <property type="term" value="C:calyx of Held"/>
    <property type="evidence" value="ECO:0000314"/>
    <property type="project" value="SynGO"/>
</dbReference>
<dbReference type="GO" id="GO:0031252">
    <property type="term" value="C:cell leading edge"/>
    <property type="evidence" value="ECO:0000314"/>
    <property type="project" value="UniProtKB"/>
</dbReference>
<dbReference type="GO" id="GO:0071439">
    <property type="term" value="C:clathrin complex"/>
    <property type="evidence" value="ECO:0000314"/>
    <property type="project" value="UniProtKB"/>
</dbReference>
<dbReference type="GO" id="GO:0005905">
    <property type="term" value="C:clathrin-coated pit"/>
    <property type="evidence" value="ECO:0000250"/>
    <property type="project" value="UniProtKB"/>
</dbReference>
<dbReference type="GO" id="GO:0030136">
    <property type="term" value="C:clathrin-coated vesicle"/>
    <property type="evidence" value="ECO:0000266"/>
    <property type="project" value="RGD"/>
</dbReference>
<dbReference type="GO" id="GO:0005886">
    <property type="term" value="C:plasma membrane"/>
    <property type="evidence" value="ECO:0007669"/>
    <property type="project" value="UniProtKB-SubCell"/>
</dbReference>
<dbReference type="GO" id="GO:0098793">
    <property type="term" value="C:presynapse"/>
    <property type="evidence" value="ECO:0000314"/>
    <property type="project" value="SynGO"/>
</dbReference>
<dbReference type="GO" id="GO:0043195">
    <property type="term" value="C:terminal bouton"/>
    <property type="evidence" value="ECO:0000314"/>
    <property type="project" value="UniProtKB"/>
</dbReference>
<dbReference type="GO" id="GO:0035612">
    <property type="term" value="F:AP-2 adaptor complex binding"/>
    <property type="evidence" value="ECO:0000314"/>
    <property type="project" value="UniProtKB"/>
</dbReference>
<dbReference type="GO" id="GO:0005524">
    <property type="term" value="F:ATP binding"/>
    <property type="evidence" value="ECO:0007669"/>
    <property type="project" value="UniProtKB-KW"/>
</dbReference>
<dbReference type="GO" id="GO:0005112">
    <property type="term" value="F:Notch binding"/>
    <property type="evidence" value="ECO:0000250"/>
    <property type="project" value="UniProtKB"/>
</dbReference>
<dbReference type="GO" id="GO:0106310">
    <property type="term" value="F:protein serine kinase activity"/>
    <property type="evidence" value="ECO:0007669"/>
    <property type="project" value="RHEA"/>
</dbReference>
<dbReference type="GO" id="GO:0004674">
    <property type="term" value="F:protein serine/threonine kinase activity"/>
    <property type="evidence" value="ECO:0000314"/>
    <property type="project" value="UniProtKB"/>
</dbReference>
<dbReference type="GO" id="GO:0045747">
    <property type="term" value="P:positive regulation of Notch signaling pathway"/>
    <property type="evidence" value="ECO:0000250"/>
    <property type="project" value="UniProtKB"/>
</dbReference>
<dbReference type="GO" id="GO:0140238">
    <property type="term" value="P:presynaptic endocytosis"/>
    <property type="evidence" value="ECO:0000314"/>
    <property type="project" value="SynGO"/>
</dbReference>
<dbReference type="GO" id="GO:0050821">
    <property type="term" value="P:protein stabilization"/>
    <property type="evidence" value="ECO:0000250"/>
    <property type="project" value="UniProtKB"/>
</dbReference>
<dbReference type="GO" id="GO:2000369">
    <property type="term" value="P:regulation of clathrin-dependent endocytosis"/>
    <property type="evidence" value="ECO:0000314"/>
    <property type="project" value="UniProtKB"/>
</dbReference>
<dbReference type="GO" id="GO:0032880">
    <property type="term" value="P:regulation of protein localization"/>
    <property type="evidence" value="ECO:0000250"/>
    <property type="project" value="UniProtKB"/>
</dbReference>
<dbReference type="CDD" id="cd14037">
    <property type="entry name" value="STKc_NAK_like"/>
    <property type="match status" value="1"/>
</dbReference>
<dbReference type="FunFam" id="1.10.510.10:FF:000072">
    <property type="entry name" value="AP2 associated kinase 1"/>
    <property type="match status" value="1"/>
</dbReference>
<dbReference type="Gene3D" id="1.10.510.10">
    <property type="entry name" value="Transferase(Phosphotransferase) domain 1"/>
    <property type="match status" value="1"/>
</dbReference>
<dbReference type="InterPro" id="IPR051744">
    <property type="entry name" value="AP2_assoc_SerThr_kinase"/>
</dbReference>
<dbReference type="InterPro" id="IPR011009">
    <property type="entry name" value="Kinase-like_dom_sf"/>
</dbReference>
<dbReference type="InterPro" id="IPR000719">
    <property type="entry name" value="Prot_kinase_dom"/>
</dbReference>
<dbReference type="InterPro" id="IPR008271">
    <property type="entry name" value="Ser/Thr_kinase_AS"/>
</dbReference>
<dbReference type="PANTHER" id="PTHR47907:SF3">
    <property type="entry name" value="AP2-ASSOCIATED PROTEIN KINASE 1"/>
    <property type="match status" value="1"/>
</dbReference>
<dbReference type="PANTHER" id="PTHR47907">
    <property type="entry name" value="PROTEIN KINASE DOMAIN-CONTAINING PROTEIN"/>
    <property type="match status" value="1"/>
</dbReference>
<dbReference type="Pfam" id="PF00069">
    <property type="entry name" value="Pkinase"/>
    <property type="match status" value="1"/>
</dbReference>
<dbReference type="SMART" id="SM00220">
    <property type="entry name" value="S_TKc"/>
    <property type="match status" value="1"/>
</dbReference>
<dbReference type="SUPFAM" id="SSF56112">
    <property type="entry name" value="Protein kinase-like (PK-like)"/>
    <property type="match status" value="1"/>
</dbReference>
<dbReference type="PROSITE" id="PS50011">
    <property type="entry name" value="PROTEIN_KINASE_DOM"/>
    <property type="match status" value="1"/>
</dbReference>
<dbReference type="PROSITE" id="PS00108">
    <property type="entry name" value="PROTEIN_KINASE_ST"/>
    <property type="match status" value="1"/>
</dbReference>
<accession>P0C1X8</accession>
<keyword id="KW-0007">Acetylation</keyword>
<keyword id="KW-0067">ATP-binding</keyword>
<keyword id="KW-1003">Cell membrane</keyword>
<keyword id="KW-0966">Cell projection</keyword>
<keyword id="KW-0168">Coated pit</keyword>
<keyword id="KW-0254">Endocytosis</keyword>
<keyword id="KW-0418">Kinase</keyword>
<keyword id="KW-0472">Membrane</keyword>
<keyword id="KW-0488">Methylation</keyword>
<keyword id="KW-0547">Nucleotide-binding</keyword>
<keyword id="KW-0597">Phosphoprotein</keyword>
<keyword id="KW-1185">Reference proteome</keyword>
<keyword id="KW-0723">Serine/threonine-protein kinase</keyword>
<keyword id="KW-0770">Synapse</keyword>
<keyword id="KW-0808">Transferase</keyword>
<protein>
    <recommendedName>
        <fullName>AP2-associated protein kinase 1</fullName>
        <ecNumber evidence="2">2.7.11.1</ecNumber>
    </recommendedName>
    <alternativeName>
        <fullName>Adaptor-associated kinase 1</fullName>
    </alternativeName>
</protein>
<evidence type="ECO:0000250" key="1">
    <source>
        <dbReference type="UniProtKB" id="F1MH24"/>
    </source>
</evidence>
<evidence type="ECO:0000250" key="2">
    <source>
        <dbReference type="UniProtKB" id="Q2M2I8"/>
    </source>
</evidence>
<evidence type="ECO:0000250" key="3">
    <source>
        <dbReference type="UniProtKB" id="Q3UHJ0"/>
    </source>
</evidence>
<evidence type="ECO:0000255" key="4">
    <source>
        <dbReference type="PROSITE-ProRule" id="PRU00159"/>
    </source>
</evidence>
<evidence type="ECO:0000255" key="5">
    <source>
        <dbReference type="PROSITE-ProRule" id="PRU10027"/>
    </source>
</evidence>
<evidence type="ECO:0000256" key="6">
    <source>
        <dbReference type="SAM" id="MobiDB-lite"/>
    </source>
</evidence>
<evidence type="ECO:0000269" key="7">
    <source>
    </source>
</evidence>
<evidence type="ECO:0000305" key="8"/>
<evidence type="ECO:0007744" key="9">
    <source>
    </source>
</evidence>
<name>AAK1_RAT</name>
<organism>
    <name type="scientific">Rattus norvegicus</name>
    <name type="common">Rat</name>
    <dbReference type="NCBI Taxonomy" id="10116"/>
    <lineage>
        <taxon>Eukaryota</taxon>
        <taxon>Metazoa</taxon>
        <taxon>Chordata</taxon>
        <taxon>Craniata</taxon>
        <taxon>Vertebrata</taxon>
        <taxon>Euteleostomi</taxon>
        <taxon>Mammalia</taxon>
        <taxon>Eutheria</taxon>
        <taxon>Euarchontoglires</taxon>
        <taxon>Glires</taxon>
        <taxon>Rodentia</taxon>
        <taxon>Myomorpha</taxon>
        <taxon>Muroidea</taxon>
        <taxon>Muridae</taxon>
        <taxon>Murinae</taxon>
        <taxon>Rattus</taxon>
    </lineage>
</organism>
<gene>
    <name type="primary">Aak1</name>
</gene>
<sequence>MKKFFDSRREQGSSGLGSGSSGGGGSSSGLGSGYIGRVFGIGRQQVTVDEVLAEGGFALVFLVRTSNGVKCALKRMFVNNEHDLQVCKREIQIMRDLSGHKNIVGYIDSSINNVSSGDVWEVLILMDFCRGGQVVNLMNQRLQTGFTENEVLQIFCDTCEAVARLHQCKTPIIHRDLKVENILLHDRGHYVLCDFGSATNKFQNPQAEGVNAVEDEIKKYTTLSYRAPEMVNLYSGKIITTKADIWALGCLLYKLCYFTLPFGESQVAICDGSFTIPDNSRYSQDMHCLIYMLEPDPDKRPDIYQVSYFSFKLLKKECPVPNVQNSPIPTKLPEPVKASEAAVKKTQPKARLTDPIPTTETSIAPRQRPKAGQTQPNPGILPIQPALTPRKRATVQPLPQATGPSNQPSLLASVSQPKAQATPSQPLQSSQPKQPQAPPTPQQTPAPQTQGLPTQAQATPQHQQQLLLKQQQQQQQQQQQQQPQQPTAPPQPSGTFYQQQQPQQQQAQTQQQFQAVHPAAQQSVTAQFPVVSQGGSQQQLMQNFYQQQQQQQQQQQQLMAQQAALQQKTAVVVPQPQAQPATAPQAAAAQEPQIQAPARQQPKVQTTPPPTIQGQKVGSLTPPSSPKTQRAGHRRILSDVTHSAVFGVPASKSTQLLHAAAAEASLSKSKSATTTPSGSPRTSQQNVSNASEGSTWNPFDDDNFSKLTAEELLNKDFAKLGEGKLPEKLGGSAESLIPGFQATQGDAFATSSFSAGTAEKRKGGQAVDSGIPLLSVSDPFIPLQVPDAPEKLIEGLKSPDTSLLLPDLLPMTDPFGSTSDAVIEKADAAVESLIPGLEPPVAQRLPSHTESVTSNRTDSLTGEDSLLDCSLLSNPTADLLDEFAPIALSASTHKAAEDSNLISGFGVAEGSEKVAEDEFDPIPVLITKNTQGGHSRNSSGSSESSLPNLARSLLLVDQLIDL</sequence>
<reference key="1">
    <citation type="journal article" date="2004" name="Nature">
        <title>Genome sequence of the Brown Norway rat yields insights into mammalian evolution.</title>
        <authorList>
            <person name="Gibbs R.A."/>
            <person name="Weinstock G.M."/>
            <person name="Metzker M.L."/>
            <person name="Muzny D.M."/>
            <person name="Sodergren E.J."/>
            <person name="Scherer S."/>
            <person name="Scott G."/>
            <person name="Steffen D."/>
            <person name="Worley K.C."/>
            <person name="Burch P.E."/>
            <person name="Okwuonu G."/>
            <person name="Hines S."/>
            <person name="Lewis L."/>
            <person name="Deramo C."/>
            <person name="Delgado O."/>
            <person name="Dugan-Rocha S."/>
            <person name="Miner G."/>
            <person name="Morgan M."/>
            <person name="Hawes A."/>
            <person name="Gill R."/>
            <person name="Holt R.A."/>
            <person name="Adams M.D."/>
            <person name="Amanatides P.G."/>
            <person name="Baden-Tillson H."/>
            <person name="Barnstead M."/>
            <person name="Chin S."/>
            <person name="Evans C.A."/>
            <person name="Ferriera S."/>
            <person name="Fosler C."/>
            <person name="Glodek A."/>
            <person name="Gu Z."/>
            <person name="Jennings D."/>
            <person name="Kraft C.L."/>
            <person name="Nguyen T."/>
            <person name="Pfannkoch C.M."/>
            <person name="Sitter C."/>
            <person name="Sutton G.G."/>
            <person name="Venter J.C."/>
            <person name="Woodage T."/>
            <person name="Smith D."/>
            <person name="Lee H.-M."/>
            <person name="Gustafson E."/>
            <person name="Cahill P."/>
            <person name="Kana A."/>
            <person name="Doucette-Stamm L."/>
            <person name="Weinstock K."/>
            <person name="Fechtel K."/>
            <person name="Weiss R.B."/>
            <person name="Dunn D.M."/>
            <person name="Green E.D."/>
            <person name="Blakesley R.W."/>
            <person name="Bouffard G.G."/>
            <person name="De Jong P.J."/>
            <person name="Osoegawa K."/>
            <person name="Zhu B."/>
            <person name="Marra M."/>
            <person name="Schein J."/>
            <person name="Bosdet I."/>
            <person name="Fjell C."/>
            <person name="Jones S."/>
            <person name="Krzywinski M."/>
            <person name="Mathewson C."/>
            <person name="Siddiqui A."/>
            <person name="Wye N."/>
            <person name="McPherson J."/>
            <person name="Zhao S."/>
            <person name="Fraser C.M."/>
            <person name="Shetty J."/>
            <person name="Shatsman S."/>
            <person name="Geer K."/>
            <person name="Chen Y."/>
            <person name="Abramzon S."/>
            <person name="Nierman W.C."/>
            <person name="Havlak P.H."/>
            <person name="Chen R."/>
            <person name="Durbin K.J."/>
            <person name="Egan A."/>
            <person name="Ren Y."/>
            <person name="Song X.-Z."/>
            <person name="Li B."/>
            <person name="Liu Y."/>
            <person name="Qin X."/>
            <person name="Cawley S."/>
            <person name="Cooney A.J."/>
            <person name="D'Souza L.M."/>
            <person name="Martin K."/>
            <person name="Wu J.Q."/>
            <person name="Gonzalez-Garay M.L."/>
            <person name="Jackson A.R."/>
            <person name="Kalafus K.J."/>
            <person name="McLeod M.P."/>
            <person name="Milosavljevic A."/>
            <person name="Virk D."/>
            <person name="Volkov A."/>
            <person name="Wheeler D.A."/>
            <person name="Zhang Z."/>
            <person name="Bailey J.A."/>
            <person name="Eichler E.E."/>
            <person name="Tuzun E."/>
            <person name="Birney E."/>
            <person name="Mongin E."/>
            <person name="Ureta-Vidal A."/>
            <person name="Woodwark C."/>
            <person name="Zdobnov E."/>
            <person name="Bork P."/>
            <person name="Suyama M."/>
            <person name="Torrents D."/>
            <person name="Alexandersson M."/>
            <person name="Trask B.J."/>
            <person name="Young J.M."/>
            <person name="Huang H."/>
            <person name="Wang H."/>
            <person name="Xing H."/>
            <person name="Daniels S."/>
            <person name="Gietzen D."/>
            <person name="Schmidt J."/>
            <person name="Stevens K."/>
            <person name="Vitt U."/>
            <person name="Wingrove J."/>
            <person name="Camara F."/>
            <person name="Mar Alba M."/>
            <person name="Abril J.F."/>
            <person name="Guigo R."/>
            <person name="Smit A."/>
            <person name="Dubchak I."/>
            <person name="Rubin E.M."/>
            <person name="Couronne O."/>
            <person name="Poliakov A."/>
            <person name="Huebner N."/>
            <person name="Ganten D."/>
            <person name="Goesele C."/>
            <person name="Hummel O."/>
            <person name="Kreitler T."/>
            <person name="Lee Y.-A."/>
            <person name="Monti J."/>
            <person name="Schulz H."/>
            <person name="Zimdahl H."/>
            <person name="Himmelbauer H."/>
            <person name="Lehrach H."/>
            <person name="Jacob H.J."/>
            <person name="Bromberg S."/>
            <person name="Gullings-Handley J."/>
            <person name="Jensen-Seaman M.I."/>
            <person name="Kwitek A.E."/>
            <person name="Lazar J."/>
            <person name="Pasko D."/>
            <person name="Tonellato P.J."/>
            <person name="Twigger S."/>
            <person name="Ponting C.P."/>
            <person name="Duarte J.M."/>
            <person name="Rice S."/>
            <person name="Goodstadt L."/>
            <person name="Beatson S.A."/>
            <person name="Emes R.D."/>
            <person name="Winter E.E."/>
            <person name="Webber C."/>
            <person name="Brandt P."/>
            <person name="Nyakatura G."/>
            <person name="Adetobi M."/>
            <person name="Chiaromonte F."/>
            <person name="Elnitski L."/>
            <person name="Eswara P."/>
            <person name="Hardison R.C."/>
            <person name="Hou M."/>
            <person name="Kolbe D."/>
            <person name="Makova K."/>
            <person name="Miller W."/>
            <person name="Nekrutenko A."/>
            <person name="Riemer C."/>
            <person name="Schwartz S."/>
            <person name="Taylor J."/>
            <person name="Yang S."/>
            <person name="Zhang Y."/>
            <person name="Lindpaintner K."/>
            <person name="Andrews T.D."/>
            <person name="Caccamo M."/>
            <person name="Clamp M."/>
            <person name="Clarke L."/>
            <person name="Curwen V."/>
            <person name="Durbin R.M."/>
            <person name="Eyras E."/>
            <person name="Searle S.M."/>
            <person name="Cooper G.M."/>
            <person name="Batzoglou S."/>
            <person name="Brudno M."/>
            <person name="Sidow A."/>
            <person name="Stone E.A."/>
            <person name="Payseur B.A."/>
            <person name="Bourque G."/>
            <person name="Lopez-Otin C."/>
            <person name="Puente X.S."/>
            <person name="Chakrabarti K."/>
            <person name="Chatterji S."/>
            <person name="Dewey C."/>
            <person name="Pachter L."/>
            <person name="Bray N."/>
            <person name="Yap V.B."/>
            <person name="Caspi A."/>
            <person name="Tesler G."/>
            <person name="Pevzner P.A."/>
            <person name="Haussler D."/>
            <person name="Roskin K.M."/>
            <person name="Baertsch R."/>
            <person name="Clawson H."/>
            <person name="Furey T.S."/>
            <person name="Hinrichs A.S."/>
            <person name="Karolchik D."/>
            <person name="Kent W.J."/>
            <person name="Rosenbloom K.R."/>
            <person name="Trumbower H."/>
            <person name="Weirauch M."/>
            <person name="Cooper D.N."/>
            <person name="Stenson P.D."/>
            <person name="Ma B."/>
            <person name="Brent M."/>
            <person name="Arumugam M."/>
            <person name="Shteynberg D."/>
            <person name="Copley R.R."/>
            <person name="Taylor M.S."/>
            <person name="Riethman H."/>
            <person name="Mudunuri U."/>
            <person name="Peterson J."/>
            <person name="Guyer M."/>
            <person name="Felsenfeld A."/>
            <person name="Old S."/>
            <person name="Mockrin S."/>
            <person name="Collins F.S."/>
        </authorList>
    </citation>
    <scope>NUCLEOTIDE SEQUENCE [LARGE SCALE GENOMIC DNA]</scope>
    <source>
        <strain>Brown Norway</strain>
    </source>
</reference>
<reference key="2">
    <citation type="journal article" date="2002" name="J. Cell Biol.">
        <title>Identification of an adaptor-associated kinase, AAK1, as a regulator of clathrin-mediated endocytosis.</title>
        <authorList>
            <person name="Conner S.D."/>
            <person name="Schmid S.L."/>
        </authorList>
    </citation>
    <scope>FUNCTION</scope>
    <scope>INTERACTION WITH ALPHA-ADAPTIN</scope>
    <scope>SUBCELLULAR LOCATION</scope>
</reference>
<reference key="3">
    <citation type="journal article" date="2012" name="Nat. Commun.">
        <title>Quantitative maps of protein phosphorylation sites across 14 different rat organs and tissues.</title>
        <authorList>
            <person name="Lundby A."/>
            <person name="Secher A."/>
            <person name="Lage K."/>
            <person name="Nordsborg N.B."/>
            <person name="Dmytriyev A."/>
            <person name="Lundby C."/>
            <person name="Olsen J.V."/>
        </authorList>
    </citation>
    <scope>PHOSPHORYLATION [LARGE SCALE ANALYSIS] AT SER-619; THR-621; SER-625; SER-638 AND SER-939</scope>
    <scope>IDENTIFICATION BY MASS SPECTROMETRY [LARGE SCALE ANALYSIS]</scope>
</reference>